<organismHost>
    <name type="scientific">Gallus gallus</name>
    <name type="common">Chicken</name>
    <dbReference type="NCBI Taxonomy" id="9031"/>
</organismHost>
<name>VG69_GAHVM</name>
<feature type="chain" id="PRO_0000406594" description="Uncharacterized gene 69 protein">
    <location>
        <begin position="1"/>
        <end position="269"/>
    </location>
</feature>
<feature type="region of interest" description="Disordered" evidence="1">
    <location>
        <begin position="1"/>
        <end position="22"/>
    </location>
</feature>
<gene>
    <name type="primary">MDV069</name>
</gene>
<keyword id="KW-1185">Reference proteome</keyword>
<reference key="1">
    <citation type="journal article" date="2000" name="J. Virol.">
        <title>The genome of a very virulent Marek's disease virus.</title>
        <authorList>
            <person name="Tulman E.R."/>
            <person name="Afonso C.L."/>
            <person name="Lu Z."/>
            <person name="Zsak L."/>
            <person name="Rock D.L."/>
            <person name="Kutish G.F."/>
        </authorList>
    </citation>
    <scope>NUCLEOTIDE SEQUENCE [LARGE SCALE GENOMIC DNA]</scope>
</reference>
<organism>
    <name type="scientific">Gallid herpesvirus 2 (strain Chicken/Md5/ATCC VR-987)</name>
    <name type="common">GaHV-2</name>
    <name type="synonym">Marek's disease herpesvirus type 1</name>
    <dbReference type="NCBI Taxonomy" id="10389"/>
    <lineage>
        <taxon>Viruses</taxon>
        <taxon>Duplodnaviria</taxon>
        <taxon>Heunggongvirae</taxon>
        <taxon>Peploviricota</taxon>
        <taxon>Herviviricetes</taxon>
        <taxon>Herpesvirales</taxon>
        <taxon>Orthoherpesviridae</taxon>
        <taxon>Alphaherpesvirinae</taxon>
        <taxon>Mardivirus</taxon>
        <taxon>Mardivirus gallidalpha2</taxon>
        <taxon>Gallid alphaherpesvirus 2</taxon>
    </lineage>
</organism>
<proteinExistence type="predicted"/>
<dbReference type="EMBL" id="AF243438">
    <property type="protein sequence ID" value="AAG14249.1"/>
    <property type="molecule type" value="Genomic_DNA"/>
</dbReference>
<dbReference type="RefSeq" id="YP_001033985.1">
    <property type="nucleotide sequence ID" value="NC_002229.3"/>
</dbReference>
<dbReference type="GeneID" id="4811530"/>
<dbReference type="KEGG" id="vg:4811530"/>
<dbReference type="Proteomes" id="UP000008072">
    <property type="component" value="Segment"/>
</dbReference>
<sequence length="269" mass="29741">MSANGTDQQSDHGHSTSNNKDCADSPVWLIPREISMTNAYGIVARPVLITNVGSPINIMLTGGWKGRIVTATSSMRDKAVLWTSDLQHTSPNRGLFGQDTVKTHAWFLAMGTPWFLGRNILPKELLWFLTERCYKEASSAFADIPVVLKTVFEQFTSNCVPGIKPALLMDPRRFLEMRDPRKIICLCESAVRDNPGAHGMLVNCLCDRPGGLQCLAFIKLLESLFNDVIGSPEFIYLNFKCKFDGIFTTAVRAISGPSFSYSVSKVGDI</sequence>
<protein>
    <recommendedName>
        <fullName>Uncharacterized gene 69 protein</fullName>
    </recommendedName>
</protein>
<accession>Q77MR2</accession>
<evidence type="ECO:0000256" key="1">
    <source>
        <dbReference type="SAM" id="MobiDB-lite"/>
    </source>
</evidence>